<keyword id="KW-0488">Methylation</keyword>
<keyword id="KW-0687">Ribonucleoprotein</keyword>
<keyword id="KW-0689">Ribosomal protein</keyword>
<keyword id="KW-0694">RNA-binding</keyword>
<keyword id="KW-0699">rRNA-binding</keyword>
<comment type="function">
    <text evidence="1">Forms part of the ribosomal stalk which helps the ribosome interact with GTP-bound translation factors.</text>
</comment>
<comment type="subunit">
    <text evidence="1">Part of the ribosomal stalk of the 50S ribosomal subunit. Interacts with L10 and the large rRNA to form the base of the stalk. L10 forms an elongated spine to which L12 dimers bind in a sequential fashion forming a multimeric L10(L12)X complex.</text>
</comment>
<comment type="PTM">
    <text evidence="1">One or more lysine residues are methylated.</text>
</comment>
<comment type="similarity">
    <text evidence="1">Belongs to the universal ribosomal protein uL11 family.</text>
</comment>
<dbReference type="EMBL" id="CP000605">
    <property type="protein sequence ID" value="ACD99068.1"/>
    <property type="molecule type" value="Genomic_DNA"/>
</dbReference>
<dbReference type="RefSeq" id="WP_007053055.1">
    <property type="nucleotide sequence ID" value="NZ_AABM02000049.1"/>
</dbReference>
<dbReference type="SMR" id="B3DPS9"/>
<dbReference type="GeneID" id="69578962"/>
<dbReference type="KEGG" id="blj:BLD_1623"/>
<dbReference type="HOGENOM" id="CLU_074237_2_1_11"/>
<dbReference type="Proteomes" id="UP000002419">
    <property type="component" value="Chromosome"/>
</dbReference>
<dbReference type="GO" id="GO:0022625">
    <property type="term" value="C:cytosolic large ribosomal subunit"/>
    <property type="evidence" value="ECO:0007669"/>
    <property type="project" value="TreeGrafter"/>
</dbReference>
<dbReference type="GO" id="GO:0070180">
    <property type="term" value="F:large ribosomal subunit rRNA binding"/>
    <property type="evidence" value="ECO:0007669"/>
    <property type="project" value="UniProtKB-UniRule"/>
</dbReference>
<dbReference type="GO" id="GO:0003735">
    <property type="term" value="F:structural constituent of ribosome"/>
    <property type="evidence" value="ECO:0007669"/>
    <property type="project" value="InterPro"/>
</dbReference>
<dbReference type="GO" id="GO:0006412">
    <property type="term" value="P:translation"/>
    <property type="evidence" value="ECO:0007669"/>
    <property type="project" value="UniProtKB-UniRule"/>
</dbReference>
<dbReference type="CDD" id="cd00349">
    <property type="entry name" value="Ribosomal_L11"/>
    <property type="match status" value="1"/>
</dbReference>
<dbReference type="FunFam" id="1.10.10.250:FF:000001">
    <property type="entry name" value="50S ribosomal protein L11"/>
    <property type="match status" value="1"/>
</dbReference>
<dbReference type="FunFam" id="3.30.1550.10:FF:000001">
    <property type="entry name" value="50S ribosomal protein L11"/>
    <property type="match status" value="1"/>
</dbReference>
<dbReference type="Gene3D" id="1.10.10.250">
    <property type="entry name" value="Ribosomal protein L11, C-terminal domain"/>
    <property type="match status" value="1"/>
</dbReference>
<dbReference type="Gene3D" id="3.30.1550.10">
    <property type="entry name" value="Ribosomal protein L11/L12, N-terminal domain"/>
    <property type="match status" value="1"/>
</dbReference>
<dbReference type="HAMAP" id="MF_00736">
    <property type="entry name" value="Ribosomal_uL11"/>
    <property type="match status" value="1"/>
</dbReference>
<dbReference type="InterPro" id="IPR000911">
    <property type="entry name" value="Ribosomal_uL11"/>
</dbReference>
<dbReference type="InterPro" id="IPR006519">
    <property type="entry name" value="Ribosomal_uL11_bac-typ"/>
</dbReference>
<dbReference type="InterPro" id="IPR020783">
    <property type="entry name" value="Ribosomal_uL11_C"/>
</dbReference>
<dbReference type="InterPro" id="IPR036769">
    <property type="entry name" value="Ribosomal_uL11_C_sf"/>
</dbReference>
<dbReference type="InterPro" id="IPR020785">
    <property type="entry name" value="Ribosomal_uL11_CS"/>
</dbReference>
<dbReference type="InterPro" id="IPR020784">
    <property type="entry name" value="Ribosomal_uL11_N"/>
</dbReference>
<dbReference type="InterPro" id="IPR036796">
    <property type="entry name" value="Ribosomal_uL11_N_sf"/>
</dbReference>
<dbReference type="NCBIfam" id="TIGR01632">
    <property type="entry name" value="L11_bact"/>
    <property type="match status" value="1"/>
</dbReference>
<dbReference type="PANTHER" id="PTHR11661">
    <property type="entry name" value="60S RIBOSOMAL PROTEIN L12"/>
    <property type="match status" value="1"/>
</dbReference>
<dbReference type="PANTHER" id="PTHR11661:SF1">
    <property type="entry name" value="LARGE RIBOSOMAL SUBUNIT PROTEIN UL11M"/>
    <property type="match status" value="1"/>
</dbReference>
<dbReference type="Pfam" id="PF00298">
    <property type="entry name" value="Ribosomal_L11"/>
    <property type="match status" value="1"/>
</dbReference>
<dbReference type="Pfam" id="PF03946">
    <property type="entry name" value="Ribosomal_L11_N"/>
    <property type="match status" value="1"/>
</dbReference>
<dbReference type="SMART" id="SM00649">
    <property type="entry name" value="RL11"/>
    <property type="match status" value="1"/>
</dbReference>
<dbReference type="SUPFAM" id="SSF54747">
    <property type="entry name" value="Ribosomal L11/L12e N-terminal domain"/>
    <property type="match status" value="1"/>
</dbReference>
<dbReference type="SUPFAM" id="SSF46906">
    <property type="entry name" value="Ribosomal protein L11, C-terminal domain"/>
    <property type="match status" value="1"/>
</dbReference>
<dbReference type="PROSITE" id="PS00359">
    <property type="entry name" value="RIBOSOMAL_L11"/>
    <property type="match status" value="1"/>
</dbReference>
<accession>B3DPS9</accession>
<evidence type="ECO:0000255" key="1">
    <source>
        <dbReference type="HAMAP-Rule" id="MF_00736"/>
    </source>
</evidence>
<evidence type="ECO:0000305" key="2"/>
<feature type="chain" id="PRO_1000132867" description="Large ribosomal subunit protein uL11">
    <location>
        <begin position="1"/>
        <end position="143"/>
    </location>
</feature>
<organism>
    <name type="scientific">Bifidobacterium longum (strain DJO10A)</name>
    <dbReference type="NCBI Taxonomy" id="205913"/>
    <lineage>
        <taxon>Bacteria</taxon>
        <taxon>Bacillati</taxon>
        <taxon>Actinomycetota</taxon>
        <taxon>Actinomycetes</taxon>
        <taxon>Bifidobacteriales</taxon>
        <taxon>Bifidobacteriaceae</taxon>
        <taxon>Bifidobacterium</taxon>
    </lineage>
</organism>
<protein>
    <recommendedName>
        <fullName evidence="1">Large ribosomal subunit protein uL11</fullName>
    </recommendedName>
    <alternativeName>
        <fullName evidence="2">50S ribosomal protein L11</fullName>
    </alternativeName>
</protein>
<gene>
    <name evidence="1" type="primary">rplK</name>
    <name type="ordered locus">BLD_1623</name>
</gene>
<name>RL11_BIFLD</name>
<reference key="1">
    <citation type="journal article" date="2008" name="BMC Genomics">
        <title>Comparative genomic analysis of the gut bacterium Bifidobacterium longum reveals loci susceptible to deletion during pure culture growth.</title>
        <authorList>
            <person name="Lee J.H."/>
            <person name="Karamychev V.N."/>
            <person name="Kozyavkin S.A."/>
            <person name="Mills D."/>
            <person name="Pavlov A.R."/>
            <person name="Pavlova N.V."/>
            <person name="Polouchine N.N."/>
            <person name="Richardson P.M."/>
            <person name="Shakhova V.V."/>
            <person name="Slesarev A.I."/>
            <person name="Weimer B."/>
            <person name="O'Sullivan D.J."/>
        </authorList>
    </citation>
    <scope>NUCLEOTIDE SEQUENCE [LARGE SCALE GENOMIC DNA]</scope>
    <source>
        <strain>DJO10A</strain>
    </source>
</reference>
<proteinExistence type="inferred from homology"/>
<sequence length="143" mass="15244">MAPKKKVSALIKLQIQAGKANPAPPLGPALGSHGVNIMDFCKAYNAQTQDKMGQVIPVEITVYEDRSFTFVLKTPPAAALLKKAAGVEKGTENPLTHKVGSVTKAQVREIAEIKMEDLSARDIEAGMKIIEGTARSMGITVTD</sequence>